<name>FLAB3_METJA</name>
<dbReference type="EMBL" id="L77117">
    <property type="protein sequence ID" value="AAB98896.1"/>
    <property type="status" value="ALT_INIT"/>
    <property type="molecule type" value="Genomic_DNA"/>
</dbReference>
<dbReference type="PIR" id="E64411">
    <property type="entry name" value="E64411"/>
</dbReference>
<dbReference type="RefSeq" id="WP_209320038.1">
    <property type="nucleotide sequence ID" value="NC_000909.1"/>
</dbReference>
<dbReference type="SMR" id="Q58303"/>
<dbReference type="STRING" id="243232.MJ_0893"/>
<dbReference type="PaxDb" id="243232-MJ_0893"/>
<dbReference type="DNASU" id="1451782"/>
<dbReference type="EnsemblBacteria" id="AAB98896">
    <property type="protein sequence ID" value="AAB98896"/>
    <property type="gene ID" value="MJ_0893"/>
</dbReference>
<dbReference type="GeneID" id="1451782"/>
<dbReference type="KEGG" id="mja:MJ_0893"/>
<dbReference type="eggNOG" id="arCOG01829">
    <property type="taxonomic scope" value="Archaea"/>
</dbReference>
<dbReference type="HOGENOM" id="CLU_051124_0_1_2"/>
<dbReference type="InParanoid" id="Q58303"/>
<dbReference type="OrthoDB" id="102632at2157"/>
<dbReference type="PhylomeDB" id="Q58303"/>
<dbReference type="Proteomes" id="UP000000805">
    <property type="component" value="Chromosome"/>
</dbReference>
<dbReference type="GO" id="GO:0097589">
    <property type="term" value="C:archaeal-type flagellum"/>
    <property type="evidence" value="ECO:0007669"/>
    <property type="project" value="UniProtKB-SubCell"/>
</dbReference>
<dbReference type="GO" id="GO:0005198">
    <property type="term" value="F:structural molecule activity"/>
    <property type="evidence" value="ECO:0007669"/>
    <property type="project" value="InterPro"/>
</dbReference>
<dbReference type="GO" id="GO:0097588">
    <property type="term" value="P:archaeal or bacterial-type flagellum-dependent cell motility"/>
    <property type="evidence" value="ECO:0007669"/>
    <property type="project" value="InterPro"/>
</dbReference>
<dbReference type="InterPro" id="IPR013373">
    <property type="entry name" value="Flagellin/pilin_N_arc"/>
</dbReference>
<dbReference type="InterPro" id="IPR002774">
    <property type="entry name" value="Flagellin_arc"/>
</dbReference>
<dbReference type="NCBIfam" id="TIGR02537">
    <property type="entry name" value="arch_flag_Nterm"/>
    <property type="match status" value="1"/>
</dbReference>
<dbReference type="NCBIfam" id="NF006325">
    <property type="entry name" value="PRK08541.1"/>
    <property type="match status" value="1"/>
</dbReference>
<dbReference type="PANTHER" id="PTHR35903">
    <property type="entry name" value="FLAGELLIN B1"/>
    <property type="match status" value="1"/>
</dbReference>
<dbReference type="PANTHER" id="PTHR35903:SF1">
    <property type="entry name" value="FLAGELLIN B1"/>
    <property type="match status" value="1"/>
</dbReference>
<dbReference type="Pfam" id="PF01917">
    <property type="entry name" value="Arch_flagellin"/>
    <property type="match status" value="1"/>
</dbReference>
<organism>
    <name type="scientific">Methanocaldococcus jannaschii (strain ATCC 43067 / DSM 2661 / JAL-1 / JCM 10045 / NBRC 100440)</name>
    <name type="common">Methanococcus jannaschii</name>
    <dbReference type="NCBI Taxonomy" id="243232"/>
    <lineage>
        <taxon>Archaea</taxon>
        <taxon>Methanobacteriati</taxon>
        <taxon>Methanobacteriota</taxon>
        <taxon>Methanomada group</taxon>
        <taxon>Methanococci</taxon>
        <taxon>Methanococcales</taxon>
        <taxon>Methanocaldococcaceae</taxon>
        <taxon>Methanocaldococcus</taxon>
    </lineage>
</organism>
<protein>
    <recommendedName>
        <fullName>Flagellin B3</fullName>
    </recommendedName>
</protein>
<reference key="1">
    <citation type="journal article" date="1996" name="Science">
        <title>Complete genome sequence of the methanogenic archaeon, Methanococcus jannaschii.</title>
        <authorList>
            <person name="Bult C.J."/>
            <person name="White O."/>
            <person name="Olsen G.J."/>
            <person name="Zhou L."/>
            <person name="Fleischmann R.D."/>
            <person name="Sutton G.G."/>
            <person name="Blake J.A."/>
            <person name="FitzGerald L.M."/>
            <person name="Clayton R.A."/>
            <person name="Gocayne J.D."/>
            <person name="Kerlavage A.R."/>
            <person name="Dougherty B.A."/>
            <person name="Tomb J.-F."/>
            <person name="Adams M.D."/>
            <person name="Reich C.I."/>
            <person name="Overbeek R."/>
            <person name="Kirkness E.F."/>
            <person name="Weinstock K.G."/>
            <person name="Merrick J.M."/>
            <person name="Glodek A."/>
            <person name="Scott J.L."/>
            <person name="Geoghagen N.S.M."/>
            <person name="Weidman J.F."/>
            <person name="Fuhrmann J.L."/>
            <person name="Nguyen D."/>
            <person name="Utterback T.R."/>
            <person name="Kelley J.M."/>
            <person name="Peterson J.D."/>
            <person name="Sadow P.W."/>
            <person name="Hanna M.C."/>
            <person name="Cotton M.D."/>
            <person name="Roberts K.M."/>
            <person name="Hurst M.A."/>
            <person name="Kaine B.P."/>
            <person name="Borodovsky M."/>
            <person name="Klenk H.-P."/>
            <person name="Fraser C.M."/>
            <person name="Smith H.O."/>
            <person name="Woese C.R."/>
            <person name="Venter J.C."/>
        </authorList>
    </citation>
    <scope>NUCLEOTIDE SEQUENCE [LARGE SCALE GENOMIC DNA]</scope>
    <source>
        <strain>ATCC 43067 / DSM 2661 / JAL-1 / JCM 10045 / NBRC 100440</strain>
    </source>
</reference>
<sequence>MLLDYIKSRRGAIGIGTLIIFIALVLVAAVAAAVIINTAANLQHKAARVGEESTRQVASGIQVLKITGYAVNTKNITKLAILVSPNVGDEIDLSSTIVTISNGDYKASLVYGGQITYVNTNGTRDIFNESWPNIANPTTEFGVIVLQDADGSMNNTEHPTMNFGDKAIIAINVGDVFGGIMPRERIYGEVIPEFGASGIIEFRAPSTFSEHVVTLQ</sequence>
<evidence type="ECO:0000250" key="1"/>
<evidence type="ECO:0000305" key="2"/>
<proteinExistence type="inferred from homology"/>
<gene>
    <name type="primary">flaB3</name>
    <name type="ordered locus">MJ0893</name>
</gene>
<feature type="propeptide" id="PRO_0000009377" evidence="1">
    <location>
        <begin position="1"/>
        <end position="11"/>
    </location>
</feature>
<feature type="chain" id="PRO_0000009378" description="Flagellin B3">
    <location>
        <begin position="12"/>
        <end position="216"/>
    </location>
</feature>
<keyword id="KW-0974">Archaeal flagellum</keyword>
<keyword id="KW-1185">Reference proteome</keyword>
<comment type="function">
    <text>Flagellin is the subunit protein which polymerizes to form the filaments of archaeal flagella.</text>
</comment>
<comment type="subcellular location">
    <subcellularLocation>
        <location>Archaeal flagellum</location>
    </subcellularLocation>
</comment>
<comment type="similarity">
    <text evidence="2">Belongs to the archaeal flagellin family.</text>
</comment>
<comment type="sequence caution" evidence="2">
    <conflict type="erroneous initiation">
        <sequence resource="EMBL-CDS" id="AAB98896"/>
    </conflict>
</comment>
<accession>Q58303</accession>